<organism>
    <name type="scientific">Coccidioides posadasii (strain C735)</name>
    <name type="common">Valley fever fungus</name>
    <dbReference type="NCBI Taxonomy" id="222929"/>
    <lineage>
        <taxon>Eukaryota</taxon>
        <taxon>Fungi</taxon>
        <taxon>Dikarya</taxon>
        <taxon>Ascomycota</taxon>
        <taxon>Pezizomycotina</taxon>
        <taxon>Eurotiomycetes</taxon>
        <taxon>Eurotiomycetidae</taxon>
        <taxon>Onygenales</taxon>
        <taxon>Onygenaceae</taxon>
        <taxon>Coccidioides</taxon>
    </lineage>
</organism>
<sequence length="427" mass="47400">MRFLIGALLTLQTLVQASSMSSMPNSYPVPEAPAEGGFRSVVYFVNWAIYGRGHNPQDLKADQFTHILYAFANIRPSGEVYLSDTWADTDKHYPGDKWDEPGKNVYGCTKQMYLLKKNNRNLKTLLSIGGWTYSPNFKTPASTEEGRKKFADTSLKLMKDLGFDGIDIDWEYPEDEKQANDFVLLLKACREALDAYSAKHPNGKKFLLTIASPAGPQNYNKLKLAEMDKYLDFWNLMAYDFSGSWDKVSGHMSNVFPSTTKPESTPFSSDKAVKDYIKAGVPANKIVLGMPLYGRAFASTDGIGTSFNGVGGGSWENGVWDYKDMPQQGAQVTELEDIAASYSYDKNKRYLISYDTVKIAGKKAEYITKNGMGGGMWWESSSDKTGNESLVGTVVNGLGGTGKLEQRENELSYPESVYDNLKNGMPS</sequence>
<accession>C5P230</accession>
<accession>P54196</accession>
<accession>Q00432</accession>
<accession>Q00435</accession>
<accession>Q400W4</accession>
<accession>Q400W5</accession>
<accession>Q400W6</accession>
<accession>Q9C0M7</accession>
<accession>Q9C2W1</accession>
<protein>
    <recommendedName>
        <fullName>Endochitinase 1</fullName>
        <ecNumber>3.2.1.14</ecNumber>
    </recommendedName>
    <alternativeName>
        <fullName>CiX1</fullName>
    </alternativeName>
    <alternativeName>
        <fullName>Complement-fixation antigen</fullName>
        <shortName>CF-AG</shortName>
        <shortName>CF-antigen</shortName>
    </alternativeName>
</protein>
<proteinExistence type="inferred from homology"/>
<reference key="1">
    <citation type="journal article" date="1995" name="Gene">
        <title>Isolation and characterization of two chitinase-encoding genes (cts1, cts2) from the fungus Coccidioides immitis.</title>
        <authorList>
            <person name="Pishko E.J."/>
            <person name="Kirkland T.N."/>
            <person name="Cole G.T."/>
        </authorList>
    </citation>
    <scope>NUCLEOTIDE SEQUENCE [GENOMIC DNA]</scope>
    <source>
        <strain>C735</strain>
    </source>
</reference>
<reference key="2">
    <citation type="journal article" date="2009" name="Genome Res.">
        <title>Comparative genomic analyses of the human fungal pathogens Coccidioides and their relatives.</title>
        <authorList>
            <person name="Sharpton T.J."/>
            <person name="Stajich J.E."/>
            <person name="Rounsley S.D."/>
            <person name="Gardner M.J."/>
            <person name="Wortman J.R."/>
            <person name="Jordar V.S."/>
            <person name="Maiti R."/>
            <person name="Kodira C.D."/>
            <person name="Neafsey D.E."/>
            <person name="Zeng Q."/>
            <person name="Hung C.-Y."/>
            <person name="McMahan C."/>
            <person name="Muszewska A."/>
            <person name="Grynberg M."/>
            <person name="Mandel M.A."/>
            <person name="Kellner E.M."/>
            <person name="Barker B.M."/>
            <person name="Galgiani J.N."/>
            <person name="Orbach M.J."/>
            <person name="Kirkland T.N."/>
            <person name="Cole G.T."/>
            <person name="Henn M.R."/>
            <person name="Birren B.W."/>
            <person name="Taylor J.W."/>
        </authorList>
    </citation>
    <scope>NUCLEOTIDE SEQUENCE [LARGE SCALE GENOMIC DNA]</scope>
    <source>
        <strain>C735</strain>
    </source>
</reference>
<comment type="catalytic activity">
    <reaction>
        <text>Random endo-hydrolysis of N-acetyl-beta-D-glucosaminide (1-&gt;4)-beta-linkages in chitin and chitodextrins.</text>
        <dbReference type="EC" id="3.2.1.14"/>
    </reaction>
</comment>
<comment type="similarity">
    <text evidence="4">Belongs to the glycosyl hydrolase 18 family. Chitinase class V subfamily.</text>
</comment>
<comment type="sequence caution" evidence="4">
    <conflict type="erroneous gene model prediction">
        <sequence resource="EMBL-CDS" id="AAA92643"/>
    </conflict>
</comment>
<name>CHI1_COCP7</name>
<dbReference type="EC" id="3.2.1.14"/>
<dbReference type="EMBL" id="L41663">
    <property type="protein sequence ID" value="AAA92643.1"/>
    <property type="status" value="ALT_SEQ"/>
    <property type="molecule type" value="Genomic_DNA"/>
</dbReference>
<dbReference type="EMBL" id="ACFW01000012">
    <property type="protein sequence ID" value="EER28933.1"/>
    <property type="molecule type" value="Genomic_DNA"/>
</dbReference>
<dbReference type="RefSeq" id="XP_003071078.1">
    <property type="nucleotide sequence ID" value="XM_003071032.1"/>
</dbReference>
<dbReference type="SMR" id="C5P230"/>
<dbReference type="GlyCosmos" id="C5P230">
    <property type="glycosylation" value="1 site, No reported glycans"/>
</dbReference>
<dbReference type="KEGG" id="cpw:9696573"/>
<dbReference type="VEuPathDB" id="FungiDB:CPC735_036390"/>
<dbReference type="HOGENOM" id="CLU_002833_1_3_1"/>
<dbReference type="OrthoDB" id="76388at2759"/>
<dbReference type="Proteomes" id="UP000009084">
    <property type="component" value="Unassembled WGS sequence"/>
</dbReference>
<dbReference type="GO" id="GO:0005576">
    <property type="term" value="C:extracellular region"/>
    <property type="evidence" value="ECO:0007669"/>
    <property type="project" value="TreeGrafter"/>
</dbReference>
<dbReference type="GO" id="GO:0008061">
    <property type="term" value="F:chitin binding"/>
    <property type="evidence" value="ECO:0007669"/>
    <property type="project" value="UniProtKB-KW"/>
</dbReference>
<dbReference type="GO" id="GO:0008843">
    <property type="term" value="F:endochitinase activity"/>
    <property type="evidence" value="ECO:0007669"/>
    <property type="project" value="UniProtKB-EC"/>
</dbReference>
<dbReference type="GO" id="GO:0006032">
    <property type="term" value="P:chitin catabolic process"/>
    <property type="evidence" value="ECO:0007669"/>
    <property type="project" value="UniProtKB-KW"/>
</dbReference>
<dbReference type="GO" id="GO:0000272">
    <property type="term" value="P:polysaccharide catabolic process"/>
    <property type="evidence" value="ECO:0007669"/>
    <property type="project" value="UniProtKB-KW"/>
</dbReference>
<dbReference type="CDD" id="cd06548">
    <property type="entry name" value="GH18_chitinase"/>
    <property type="match status" value="1"/>
</dbReference>
<dbReference type="FunFam" id="3.10.50.10:FF:000005">
    <property type="entry name" value="Endochitinase B1"/>
    <property type="match status" value="1"/>
</dbReference>
<dbReference type="FunFam" id="3.20.20.80:FF:000095">
    <property type="entry name" value="Endochitinase B1"/>
    <property type="match status" value="1"/>
</dbReference>
<dbReference type="Gene3D" id="3.10.50.10">
    <property type="match status" value="1"/>
</dbReference>
<dbReference type="Gene3D" id="3.20.20.80">
    <property type="entry name" value="Glycosidases"/>
    <property type="match status" value="1"/>
</dbReference>
<dbReference type="InterPro" id="IPR011583">
    <property type="entry name" value="Chitinase_II/V-like_cat"/>
</dbReference>
<dbReference type="InterPro" id="IPR029070">
    <property type="entry name" value="Chitinase_insertion_sf"/>
</dbReference>
<dbReference type="InterPro" id="IPR001223">
    <property type="entry name" value="Glyco_hydro18_cat"/>
</dbReference>
<dbReference type="InterPro" id="IPR001579">
    <property type="entry name" value="Glyco_hydro_18_chit_AS"/>
</dbReference>
<dbReference type="InterPro" id="IPR017853">
    <property type="entry name" value="Glycoside_hydrolase_SF"/>
</dbReference>
<dbReference type="InterPro" id="IPR050314">
    <property type="entry name" value="Glycosyl_Hydrlase_18"/>
</dbReference>
<dbReference type="PANTHER" id="PTHR11177">
    <property type="entry name" value="CHITINASE"/>
    <property type="match status" value="1"/>
</dbReference>
<dbReference type="PANTHER" id="PTHR11177:SF317">
    <property type="entry name" value="CHITINASE 12-RELATED"/>
    <property type="match status" value="1"/>
</dbReference>
<dbReference type="Pfam" id="PF00704">
    <property type="entry name" value="Glyco_hydro_18"/>
    <property type="match status" value="1"/>
</dbReference>
<dbReference type="SMART" id="SM00636">
    <property type="entry name" value="Glyco_18"/>
    <property type="match status" value="1"/>
</dbReference>
<dbReference type="SUPFAM" id="SSF51445">
    <property type="entry name" value="(Trans)glycosidases"/>
    <property type="match status" value="1"/>
</dbReference>
<dbReference type="SUPFAM" id="SSF54556">
    <property type="entry name" value="Chitinase insertion domain"/>
    <property type="match status" value="1"/>
</dbReference>
<dbReference type="PROSITE" id="PS01095">
    <property type="entry name" value="GH18_1"/>
    <property type="match status" value="1"/>
</dbReference>
<dbReference type="PROSITE" id="PS51910">
    <property type="entry name" value="GH18_2"/>
    <property type="match status" value="1"/>
</dbReference>
<gene>
    <name type="primary">CTS1</name>
    <name type="ORF">CPC735_036390</name>
</gene>
<evidence type="ECO:0000250" key="1"/>
<evidence type="ECO:0000255" key="2"/>
<evidence type="ECO:0000255" key="3">
    <source>
        <dbReference type="PROSITE-ProRule" id="PRU01258"/>
    </source>
</evidence>
<evidence type="ECO:0000305" key="4"/>
<keyword id="KW-0119">Carbohydrate metabolism</keyword>
<keyword id="KW-0146">Chitin degradation</keyword>
<keyword id="KW-0147">Chitin-binding</keyword>
<keyword id="KW-0325">Glycoprotein</keyword>
<keyword id="KW-0326">Glycosidase</keyword>
<keyword id="KW-0378">Hydrolase</keyword>
<keyword id="KW-0624">Polysaccharide degradation</keyword>
<keyword id="KW-0732">Signal</keyword>
<feature type="signal peptide" evidence="1">
    <location>
        <begin position="1"/>
        <end position="17"/>
    </location>
</feature>
<feature type="chain" id="PRO_0000387962" description="Endochitinase 1">
    <location>
        <begin position="18"/>
        <end position="427"/>
    </location>
</feature>
<feature type="domain" description="GH18" evidence="3">
    <location>
        <begin position="38"/>
        <end position="401"/>
    </location>
</feature>
<feature type="active site" description="Proton donor" evidence="3">
    <location>
        <position position="171"/>
    </location>
</feature>
<feature type="binding site" evidence="3">
    <location>
        <begin position="102"/>
        <end position="103"/>
    </location>
    <ligand>
        <name>chitin</name>
        <dbReference type="ChEBI" id="CHEBI:17029"/>
    </ligand>
</feature>
<feature type="binding site" evidence="3">
    <location>
        <begin position="129"/>
        <end position="132"/>
    </location>
    <ligand>
        <name>chitin</name>
        <dbReference type="ChEBI" id="CHEBI:17029"/>
    </ligand>
</feature>
<feature type="binding site" evidence="3">
    <location>
        <position position="172"/>
    </location>
    <ligand>
        <name>chitin</name>
        <dbReference type="ChEBI" id="CHEBI:17029"/>
    </ligand>
</feature>
<feature type="binding site" evidence="3">
    <location>
        <begin position="237"/>
        <end position="240"/>
    </location>
    <ligand>
        <name>chitin</name>
        <dbReference type="ChEBI" id="CHEBI:17029"/>
    </ligand>
</feature>
<feature type="binding site" evidence="3">
    <location>
        <position position="378"/>
    </location>
    <ligand>
        <name>chitin</name>
        <dbReference type="ChEBI" id="CHEBI:17029"/>
    </ligand>
</feature>
<feature type="site" description="Transition state stabilizer" evidence="1">
    <location>
        <position position="169"/>
    </location>
</feature>
<feature type="glycosylation site" description="N-linked (GlcNAc...) asparagine" evidence="2">
    <location>
        <position position="387"/>
    </location>
</feature>
<feature type="sequence conflict" description="In Ref. 1; AAA92643." evidence="4" ref="1">
    <original>K</original>
    <variation>N</variation>
    <location>
        <position position="103"/>
    </location>
</feature>
<feature type="sequence conflict" description="In Ref. 1; AAA92643." evidence="4" ref="1">
    <original>T</original>
    <variation>I</variation>
    <location>
        <position position="109"/>
    </location>
</feature>